<gene>
    <name evidence="1" type="primary">rplJ</name>
    <name type="ordered locus">Cla_0447</name>
</gene>
<name>RL10_CAMLR</name>
<comment type="function">
    <text evidence="1">Forms part of the ribosomal stalk, playing a central role in the interaction of the ribosome with GTP-bound translation factors.</text>
</comment>
<comment type="subunit">
    <text evidence="1">Part of the ribosomal stalk of the 50S ribosomal subunit. The N-terminus interacts with L11 and the large rRNA to form the base of the stalk. The C-terminus forms an elongated spine to which L12 dimers bind in a sequential fashion forming a multimeric L10(L12)X complex.</text>
</comment>
<comment type="similarity">
    <text evidence="1">Belongs to the universal ribosomal protein uL10 family.</text>
</comment>
<accession>B9KFG5</accession>
<feature type="chain" id="PRO_1000195534" description="Large ribosomal subunit protein uL10">
    <location>
        <begin position="1"/>
        <end position="159"/>
    </location>
</feature>
<protein>
    <recommendedName>
        <fullName evidence="1">Large ribosomal subunit protein uL10</fullName>
    </recommendedName>
    <alternativeName>
        <fullName evidence="2">50S ribosomal protein L10</fullName>
    </alternativeName>
</protein>
<proteinExistence type="inferred from homology"/>
<sequence length="159" mass="17736">MTKSQKIELVSKLEEGFKASEAVVVCNYKGLNTKKLEELRNNAREMDVKVQIIKNTLASIALKNAGKDGMELKDTNIYLWGEDQLNVSKVADKFSEANQTFEIKTAFIDGEVASVDKVKALAKMPSRNELLAMLLQVWNAPITNFTIGLNALKEKKEAE</sequence>
<organism>
    <name type="scientific">Campylobacter lari (strain RM2100 / D67 / ATCC BAA-1060)</name>
    <dbReference type="NCBI Taxonomy" id="306263"/>
    <lineage>
        <taxon>Bacteria</taxon>
        <taxon>Pseudomonadati</taxon>
        <taxon>Campylobacterota</taxon>
        <taxon>Epsilonproteobacteria</taxon>
        <taxon>Campylobacterales</taxon>
        <taxon>Campylobacteraceae</taxon>
        <taxon>Campylobacter</taxon>
    </lineage>
</organism>
<keyword id="KW-1185">Reference proteome</keyword>
<keyword id="KW-0687">Ribonucleoprotein</keyword>
<keyword id="KW-0689">Ribosomal protein</keyword>
<keyword id="KW-0694">RNA-binding</keyword>
<keyword id="KW-0699">rRNA-binding</keyword>
<reference key="1">
    <citation type="journal article" date="2008" name="Foodborne Pathog. Dis.">
        <title>The complete genome sequence and analysis of the human pathogen Campylobacter lari.</title>
        <authorList>
            <person name="Miller W.G."/>
            <person name="Wang G."/>
            <person name="Binnewies T.T."/>
            <person name="Parker C.T."/>
        </authorList>
    </citation>
    <scope>NUCLEOTIDE SEQUENCE [LARGE SCALE GENOMIC DNA]</scope>
    <source>
        <strain>RM2100 / D67 / ATCC BAA-1060</strain>
    </source>
</reference>
<evidence type="ECO:0000255" key="1">
    <source>
        <dbReference type="HAMAP-Rule" id="MF_00362"/>
    </source>
</evidence>
<evidence type="ECO:0000305" key="2"/>
<dbReference type="EMBL" id="CP000932">
    <property type="protein sequence ID" value="ACM63800.1"/>
    <property type="molecule type" value="Genomic_DNA"/>
</dbReference>
<dbReference type="RefSeq" id="WP_012661183.1">
    <property type="nucleotide sequence ID" value="NC_012039.1"/>
</dbReference>
<dbReference type="SMR" id="B9KFG5"/>
<dbReference type="STRING" id="306263.Cla_0447"/>
<dbReference type="GeneID" id="93004535"/>
<dbReference type="KEGG" id="cla:CLA_0447"/>
<dbReference type="eggNOG" id="COG0244">
    <property type="taxonomic scope" value="Bacteria"/>
</dbReference>
<dbReference type="HOGENOM" id="CLU_092227_2_2_7"/>
<dbReference type="Proteomes" id="UP000007727">
    <property type="component" value="Chromosome"/>
</dbReference>
<dbReference type="GO" id="GO:0015934">
    <property type="term" value="C:large ribosomal subunit"/>
    <property type="evidence" value="ECO:0007669"/>
    <property type="project" value="InterPro"/>
</dbReference>
<dbReference type="GO" id="GO:0070180">
    <property type="term" value="F:large ribosomal subunit rRNA binding"/>
    <property type="evidence" value="ECO:0007669"/>
    <property type="project" value="UniProtKB-UniRule"/>
</dbReference>
<dbReference type="GO" id="GO:0003735">
    <property type="term" value="F:structural constituent of ribosome"/>
    <property type="evidence" value="ECO:0007669"/>
    <property type="project" value="InterPro"/>
</dbReference>
<dbReference type="GO" id="GO:0006412">
    <property type="term" value="P:translation"/>
    <property type="evidence" value="ECO:0007669"/>
    <property type="project" value="UniProtKB-UniRule"/>
</dbReference>
<dbReference type="CDD" id="cd05797">
    <property type="entry name" value="Ribosomal_L10"/>
    <property type="match status" value="1"/>
</dbReference>
<dbReference type="Gene3D" id="3.30.70.1730">
    <property type="match status" value="1"/>
</dbReference>
<dbReference type="Gene3D" id="6.10.250.290">
    <property type="match status" value="1"/>
</dbReference>
<dbReference type="HAMAP" id="MF_00362">
    <property type="entry name" value="Ribosomal_uL10"/>
    <property type="match status" value="1"/>
</dbReference>
<dbReference type="InterPro" id="IPR001790">
    <property type="entry name" value="Ribosomal_uL10"/>
</dbReference>
<dbReference type="InterPro" id="IPR043141">
    <property type="entry name" value="Ribosomal_uL10-like_sf"/>
</dbReference>
<dbReference type="InterPro" id="IPR022973">
    <property type="entry name" value="Ribosomal_uL10_bac"/>
</dbReference>
<dbReference type="InterPro" id="IPR047865">
    <property type="entry name" value="Ribosomal_uL10_bac_type"/>
</dbReference>
<dbReference type="InterPro" id="IPR002363">
    <property type="entry name" value="Ribosomal_uL10_CS_bac"/>
</dbReference>
<dbReference type="NCBIfam" id="NF000955">
    <property type="entry name" value="PRK00099.1-1"/>
    <property type="match status" value="1"/>
</dbReference>
<dbReference type="PANTHER" id="PTHR11560">
    <property type="entry name" value="39S RIBOSOMAL PROTEIN L10, MITOCHONDRIAL"/>
    <property type="match status" value="1"/>
</dbReference>
<dbReference type="Pfam" id="PF00466">
    <property type="entry name" value="Ribosomal_L10"/>
    <property type="match status" value="1"/>
</dbReference>
<dbReference type="SUPFAM" id="SSF160369">
    <property type="entry name" value="Ribosomal protein L10-like"/>
    <property type="match status" value="1"/>
</dbReference>
<dbReference type="PROSITE" id="PS01109">
    <property type="entry name" value="RIBOSOMAL_L10"/>
    <property type="match status" value="1"/>
</dbReference>